<comment type="function">
    <text evidence="1">May function as somatic storage protein during early seedling development.</text>
</comment>
<comment type="alternative products">
    <event type="alternative splicing"/>
    <isoform>
        <id>O82122-1</id>
        <name>1</name>
        <sequence type="displayed"/>
    </isoform>
    <text>A number of isoforms are produced. According to EST sequences.</text>
</comment>
<comment type="tissue specificity">
    <text>Highly expressed in flowers, but also found in leaves, vegetative shoots, petioles, peduncles, and receptacles of floral organs.</text>
</comment>
<comment type="induction">
    <text>Expression is enhanced during wounding.</text>
</comment>
<comment type="similarity">
    <text evidence="3">Belongs to the APS1/VSP family.</text>
</comment>
<accession>O82122</accession>
<accession>O23828</accession>
<sequence length="265" mass="29842">MKILSLSLLLLLAATVSASVPGLIELVDSKTIFGNVAELLEKEKLSINYANCRSWHLGVETSNIIDFDTVPANCKDYVEDYLITSKQYQYDSKTVCKEAYFYAKGLALKNDTVNVWIFDLDDTLLSSIPYYAKYGYGTEKTDPGAYWLWLGTGASTPGLPEALHLYQNIIELGIEPIILSDRWKLWKNVTLDNLEAAGVTYWKHLILKPNGSNLRQVVYKSKVRKSLVKKGYNIVGNIGDQWADLVEDTPGRVFKLPNPLYYVPS</sequence>
<proteinExistence type="evidence at transcript level"/>
<gene>
    <name type="primary">VSP2</name>
    <name type="ordered locus">At5g24770</name>
    <name type="ORF">T4C12.50</name>
</gene>
<dbReference type="EMBL" id="AB006778">
    <property type="protein sequence ID" value="BAA33447.1"/>
    <property type="molecule type" value="Genomic_DNA"/>
</dbReference>
<dbReference type="EMBL" id="D85191">
    <property type="protein sequence ID" value="BAA22096.1"/>
    <property type="molecule type" value="mRNA"/>
</dbReference>
<dbReference type="EMBL" id="AL392145">
    <property type="protein sequence ID" value="CAC08251.1"/>
    <property type="molecule type" value="Genomic_DNA"/>
</dbReference>
<dbReference type="EMBL" id="CP002688">
    <property type="protein sequence ID" value="AED93358.1"/>
    <property type="molecule type" value="Genomic_DNA"/>
</dbReference>
<dbReference type="EMBL" id="AY048282">
    <property type="protein sequence ID" value="AAK82544.1"/>
    <property type="molecule type" value="mRNA"/>
</dbReference>
<dbReference type="EMBL" id="AY050819">
    <property type="protein sequence ID" value="AAK92754.1"/>
    <property type="molecule type" value="mRNA"/>
</dbReference>
<dbReference type="EMBL" id="AY092991">
    <property type="protein sequence ID" value="AAM12990.1"/>
    <property type="molecule type" value="mRNA"/>
</dbReference>
<dbReference type="EMBL" id="AY114083">
    <property type="protein sequence ID" value="AAM45131.1"/>
    <property type="molecule type" value="mRNA"/>
</dbReference>
<dbReference type="EMBL" id="AY114606">
    <property type="protein sequence ID" value="AAM47925.1"/>
    <property type="molecule type" value="mRNA"/>
</dbReference>
<dbReference type="EMBL" id="BT000761">
    <property type="protein sequence ID" value="AAN31900.1"/>
    <property type="molecule type" value="mRNA"/>
</dbReference>
<dbReference type="EMBL" id="BT000762">
    <property type="protein sequence ID" value="AAN31901.1"/>
    <property type="molecule type" value="mRNA"/>
</dbReference>
<dbReference type="EMBL" id="BT006341">
    <property type="protein sequence ID" value="AAP21149.1"/>
    <property type="molecule type" value="mRNA"/>
</dbReference>
<dbReference type="RefSeq" id="NP_568454.1">
    <molecule id="O82122-1"/>
    <property type="nucleotide sequence ID" value="NM_122386.4"/>
</dbReference>
<dbReference type="SMR" id="O82122"/>
<dbReference type="BioGRID" id="17821">
    <property type="interactions" value="1"/>
</dbReference>
<dbReference type="FunCoup" id="O82122">
    <property type="interactions" value="142"/>
</dbReference>
<dbReference type="STRING" id="3702.O82122"/>
<dbReference type="GlyCosmos" id="O82122">
    <property type="glycosylation" value="3 sites, No reported glycans"/>
</dbReference>
<dbReference type="GlyGen" id="O82122">
    <property type="glycosylation" value="3 sites"/>
</dbReference>
<dbReference type="iPTMnet" id="O82122"/>
<dbReference type="PaxDb" id="3702-AT5G24770.1"/>
<dbReference type="ProteomicsDB" id="242631">
    <molecule id="O82122-1"/>
</dbReference>
<dbReference type="EnsemblPlants" id="AT5G24770.1">
    <molecule id="O82122-1"/>
    <property type="protein sequence ID" value="AT5G24770.1"/>
    <property type="gene ID" value="AT5G24770"/>
</dbReference>
<dbReference type="GeneID" id="832546"/>
<dbReference type="Gramene" id="AT5G24770.1">
    <molecule id="O82122-1"/>
    <property type="protein sequence ID" value="AT5G24770.1"/>
    <property type="gene ID" value="AT5G24770"/>
</dbReference>
<dbReference type="KEGG" id="ath:AT5G24770"/>
<dbReference type="Araport" id="AT5G24770"/>
<dbReference type="TAIR" id="AT5G24770">
    <property type="gene designation" value="VSP2"/>
</dbReference>
<dbReference type="eggNOG" id="ENOG502QU6T">
    <property type="taxonomic scope" value="Eukaryota"/>
</dbReference>
<dbReference type="HOGENOM" id="CLU_053338_1_1_1"/>
<dbReference type="InParanoid" id="O82122"/>
<dbReference type="OMA" id="DQWNDIR"/>
<dbReference type="PhylomeDB" id="O82122"/>
<dbReference type="BioCyc" id="ARA:AT5G24770-MONOMER"/>
<dbReference type="PRO" id="PR:O82122"/>
<dbReference type="Proteomes" id="UP000006548">
    <property type="component" value="Chromosome 5"/>
</dbReference>
<dbReference type="ExpressionAtlas" id="O82122">
    <property type="expression patterns" value="baseline and differential"/>
</dbReference>
<dbReference type="GO" id="GO:0022626">
    <property type="term" value="C:cytosolic ribosome"/>
    <property type="evidence" value="ECO:0007005"/>
    <property type="project" value="TAIR"/>
</dbReference>
<dbReference type="GO" id="GO:0000325">
    <property type="term" value="C:plant-type vacuole"/>
    <property type="evidence" value="ECO:0007005"/>
    <property type="project" value="TAIR"/>
</dbReference>
<dbReference type="GO" id="GO:0003993">
    <property type="term" value="F:acid phosphatase activity"/>
    <property type="evidence" value="ECO:0000314"/>
    <property type="project" value="TAIR"/>
</dbReference>
<dbReference type="GO" id="GO:0045735">
    <property type="term" value="F:nutrient reservoir activity"/>
    <property type="evidence" value="ECO:0007669"/>
    <property type="project" value="UniProtKB-KW"/>
</dbReference>
<dbReference type="GO" id="GO:0002213">
    <property type="term" value="P:defense response to insect"/>
    <property type="evidence" value="ECO:0000314"/>
    <property type="project" value="TAIR"/>
</dbReference>
<dbReference type="GO" id="GO:0046688">
    <property type="term" value="P:response to copper ion"/>
    <property type="evidence" value="ECO:0000270"/>
    <property type="project" value="TAIR"/>
</dbReference>
<dbReference type="GO" id="GO:0009625">
    <property type="term" value="P:response to insect"/>
    <property type="evidence" value="ECO:0000270"/>
    <property type="project" value="TAIR"/>
</dbReference>
<dbReference type="GO" id="GO:0009753">
    <property type="term" value="P:response to jasmonic acid"/>
    <property type="evidence" value="ECO:0000304"/>
    <property type="project" value="TAIR"/>
</dbReference>
<dbReference type="GO" id="GO:0006979">
    <property type="term" value="P:response to oxidative stress"/>
    <property type="evidence" value="ECO:0000270"/>
    <property type="project" value="TAIR"/>
</dbReference>
<dbReference type="GO" id="GO:0009611">
    <property type="term" value="P:response to wounding"/>
    <property type="evidence" value="ECO:0000270"/>
    <property type="project" value="TAIR"/>
</dbReference>
<dbReference type="CDD" id="cd07535">
    <property type="entry name" value="HAD_VSP"/>
    <property type="match status" value="1"/>
</dbReference>
<dbReference type="FunFam" id="3.40.50.1000:FF:000189">
    <property type="entry name" value="Vegetative storage protein 1"/>
    <property type="match status" value="1"/>
</dbReference>
<dbReference type="Gene3D" id="3.40.50.1000">
    <property type="entry name" value="HAD superfamily/HAD-like"/>
    <property type="match status" value="1"/>
</dbReference>
<dbReference type="InterPro" id="IPR005519">
    <property type="entry name" value="Acid_phosphat_B-like"/>
</dbReference>
<dbReference type="InterPro" id="IPR010028">
    <property type="entry name" value="Acid_phosphatase_pln"/>
</dbReference>
<dbReference type="InterPro" id="IPR014403">
    <property type="entry name" value="APS1/VSP"/>
</dbReference>
<dbReference type="InterPro" id="IPR036412">
    <property type="entry name" value="HAD-like_sf"/>
</dbReference>
<dbReference type="InterPro" id="IPR023214">
    <property type="entry name" value="HAD_sf"/>
</dbReference>
<dbReference type="NCBIfam" id="TIGR01675">
    <property type="entry name" value="plant-AP"/>
    <property type="match status" value="1"/>
</dbReference>
<dbReference type="PANTHER" id="PTHR31284">
    <property type="entry name" value="ACID PHOSPHATASE-LIKE PROTEIN"/>
    <property type="match status" value="1"/>
</dbReference>
<dbReference type="PANTHER" id="PTHR31284:SF19">
    <property type="entry name" value="VEGETATIVE STORAGE PROTEIN 1-RELATED"/>
    <property type="match status" value="1"/>
</dbReference>
<dbReference type="Pfam" id="PF03767">
    <property type="entry name" value="Acid_phosphat_B"/>
    <property type="match status" value="1"/>
</dbReference>
<dbReference type="PIRSF" id="PIRSF002674">
    <property type="entry name" value="VSP"/>
    <property type="match status" value="1"/>
</dbReference>
<dbReference type="SUPFAM" id="SSF56784">
    <property type="entry name" value="HAD-like"/>
    <property type="match status" value="1"/>
</dbReference>
<keyword id="KW-0025">Alternative splicing</keyword>
<keyword id="KW-0325">Glycoprotein</keyword>
<keyword id="KW-1185">Reference proteome</keyword>
<keyword id="KW-0732">Signal</keyword>
<keyword id="KW-0758">Storage protein</keyword>
<evidence type="ECO:0000250" key="1"/>
<evidence type="ECO:0000255" key="2"/>
<evidence type="ECO:0000305" key="3"/>
<feature type="signal peptide" evidence="2">
    <location>
        <begin position="1"/>
        <end position="18"/>
    </location>
</feature>
<feature type="chain" id="PRO_0000023988" description="Vegetative storage protein 2">
    <location>
        <begin position="19"/>
        <end position="265"/>
    </location>
</feature>
<feature type="glycosylation site" description="N-linked (GlcNAc...) asparagine" evidence="2">
    <location>
        <position position="110"/>
    </location>
</feature>
<feature type="glycosylation site" description="N-linked (GlcNAc...) asparagine" evidence="2">
    <location>
        <position position="188"/>
    </location>
</feature>
<feature type="glycosylation site" description="N-linked (GlcNAc...) asparagine" evidence="2">
    <location>
        <position position="210"/>
    </location>
</feature>
<feature type="sequence conflict" description="In Ref. 1; BAA22096." evidence="3" ref="1">
    <original>LLA</original>
    <variation>VLG</variation>
    <location>
        <begin position="11"/>
        <end position="13"/>
    </location>
</feature>
<feature type="sequence conflict" description="In Ref. 1; BAA22096." evidence="3" ref="1">
    <original>A</original>
    <variation>V</variation>
    <location>
        <position position="18"/>
    </location>
</feature>
<feature type="sequence conflict" description="In Ref. 1; BAA22096." evidence="3" ref="1">
    <original>L</original>
    <variation>V</variation>
    <location>
        <position position="23"/>
    </location>
</feature>
<feature type="sequence conflict" description="In Ref. 1; BAA22096." evidence="3" ref="1">
    <original>ALH</original>
    <variation>GLY</variation>
    <location>
        <begin position="162"/>
        <end position="164"/>
    </location>
</feature>
<feature type="sequence conflict" description="In Ref. 1; BAA22096." evidence="3" ref="1">
    <original>D</original>
    <variation>V</variation>
    <location>
        <position position="181"/>
    </location>
</feature>
<organism>
    <name type="scientific">Arabidopsis thaliana</name>
    <name type="common">Mouse-ear cress</name>
    <dbReference type="NCBI Taxonomy" id="3702"/>
    <lineage>
        <taxon>Eukaryota</taxon>
        <taxon>Viridiplantae</taxon>
        <taxon>Streptophyta</taxon>
        <taxon>Embryophyta</taxon>
        <taxon>Tracheophyta</taxon>
        <taxon>Spermatophyta</taxon>
        <taxon>Magnoliopsida</taxon>
        <taxon>eudicotyledons</taxon>
        <taxon>Gunneridae</taxon>
        <taxon>Pentapetalae</taxon>
        <taxon>rosids</taxon>
        <taxon>malvids</taxon>
        <taxon>Brassicales</taxon>
        <taxon>Brassicaceae</taxon>
        <taxon>Camelineae</taxon>
        <taxon>Arabidopsis</taxon>
    </lineage>
</organism>
<name>VSP2_ARATH</name>
<reference key="1">
    <citation type="journal article" date="1996" name="Plant Mol. Biol.">
        <title>Isolation and characterization of cDNA clones corresponding to the genes expressed preferentially in floral organs of Arabidopsis thaliana.</title>
        <authorList>
            <person name="Utsugi S."/>
            <person name="Sakamoto W."/>
            <person name="Ogura Y."/>
            <person name="Murata M."/>
            <person name="Motoyoshi F."/>
        </authorList>
    </citation>
    <scope>NUCLEOTIDE SEQUENCE [MRNA]</scope>
    <source>
        <strain>cv. Columbia</strain>
        <tissue>Flower bud</tissue>
    </source>
</reference>
<reference key="2">
    <citation type="journal article" date="1998" name="Plant Mol. Biol.">
        <title>Arabidopsis thaliana vegetative storage protein (VSP) genes: gene organization and tissue-specific expression.</title>
        <authorList>
            <person name="Utsugi S."/>
            <person name="Sakamoto W."/>
            <person name="Murata M."/>
            <person name="Motoyoshi F."/>
        </authorList>
    </citation>
    <scope>NUCLEOTIDE SEQUENCE [GENOMIC DNA]</scope>
</reference>
<reference key="3">
    <citation type="journal article" date="2000" name="Nature">
        <title>Sequence and analysis of chromosome 5 of the plant Arabidopsis thaliana.</title>
        <authorList>
            <person name="Tabata S."/>
            <person name="Kaneko T."/>
            <person name="Nakamura Y."/>
            <person name="Kotani H."/>
            <person name="Kato T."/>
            <person name="Asamizu E."/>
            <person name="Miyajima N."/>
            <person name="Sasamoto S."/>
            <person name="Kimura T."/>
            <person name="Hosouchi T."/>
            <person name="Kawashima K."/>
            <person name="Kohara M."/>
            <person name="Matsumoto M."/>
            <person name="Matsuno A."/>
            <person name="Muraki A."/>
            <person name="Nakayama S."/>
            <person name="Nakazaki N."/>
            <person name="Naruo K."/>
            <person name="Okumura S."/>
            <person name="Shinpo S."/>
            <person name="Takeuchi C."/>
            <person name="Wada T."/>
            <person name="Watanabe A."/>
            <person name="Yamada M."/>
            <person name="Yasuda M."/>
            <person name="Sato S."/>
            <person name="de la Bastide M."/>
            <person name="Huang E."/>
            <person name="Spiegel L."/>
            <person name="Gnoj L."/>
            <person name="O'Shaughnessy A."/>
            <person name="Preston R."/>
            <person name="Habermann K."/>
            <person name="Murray J."/>
            <person name="Johnson D."/>
            <person name="Rohlfing T."/>
            <person name="Nelson J."/>
            <person name="Stoneking T."/>
            <person name="Pepin K."/>
            <person name="Spieth J."/>
            <person name="Sekhon M."/>
            <person name="Armstrong J."/>
            <person name="Becker M."/>
            <person name="Belter E."/>
            <person name="Cordum H."/>
            <person name="Cordes M."/>
            <person name="Courtney L."/>
            <person name="Courtney W."/>
            <person name="Dante M."/>
            <person name="Du H."/>
            <person name="Edwards J."/>
            <person name="Fryman J."/>
            <person name="Haakensen B."/>
            <person name="Lamar E."/>
            <person name="Latreille P."/>
            <person name="Leonard S."/>
            <person name="Meyer R."/>
            <person name="Mulvaney E."/>
            <person name="Ozersky P."/>
            <person name="Riley A."/>
            <person name="Strowmatt C."/>
            <person name="Wagner-McPherson C."/>
            <person name="Wollam A."/>
            <person name="Yoakum M."/>
            <person name="Bell M."/>
            <person name="Dedhia N."/>
            <person name="Parnell L."/>
            <person name="Shah R."/>
            <person name="Rodriguez M."/>
            <person name="Hoon See L."/>
            <person name="Vil D."/>
            <person name="Baker J."/>
            <person name="Kirchoff K."/>
            <person name="Toth K."/>
            <person name="King L."/>
            <person name="Bahret A."/>
            <person name="Miller B."/>
            <person name="Marra M.A."/>
            <person name="Martienssen R."/>
            <person name="McCombie W.R."/>
            <person name="Wilson R.K."/>
            <person name="Murphy G."/>
            <person name="Bancroft I."/>
            <person name="Volckaert G."/>
            <person name="Wambutt R."/>
            <person name="Duesterhoeft A."/>
            <person name="Stiekema W."/>
            <person name="Pohl T."/>
            <person name="Entian K.-D."/>
            <person name="Terryn N."/>
            <person name="Hartley N."/>
            <person name="Bent E."/>
            <person name="Johnson S."/>
            <person name="Langham S.-A."/>
            <person name="McCullagh B."/>
            <person name="Robben J."/>
            <person name="Grymonprez B."/>
            <person name="Zimmermann W."/>
            <person name="Ramsperger U."/>
            <person name="Wedler H."/>
            <person name="Balke K."/>
            <person name="Wedler E."/>
            <person name="Peters S."/>
            <person name="van Staveren M."/>
            <person name="Dirkse W."/>
            <person name="Mooijman P."/>
            <person name="Klein Lankhorst R."/>
            <person name="Weitzenegger T."/>
            <person name="Bothe G."/>
            <person name="Rose M."/>
            <person name="Hauf J."/>
            <person name="Berneiser S."/>
            <person name="Hempel S."/>
            <person name="Feldpausch M."/>
            <person name="Lamberth S."/>
            <person name="Villarroel R."/>
            <person name="Gielen J."/>
            <person name="Ardiles W."/>
            <person name="Bents O."/>
            <person name="Lemcke K."/>
            <person name="Kolesov G."/>
            <person name="Mayer K.F.X."/>
            <person name="Rudd S."/>
            <person name="Schoof H."/>
            <person name="Schueller C."/>
            <person name="Zaccaria P."/>
            <person name="Mewes H.-W."/>
            <person name="Bevan M."/>
            <person name="Fransz P.F."/>
        </authorList>
    </citation>
    <scope>NUCLEOTIDE SEQUENCE [LARGE SCALE GENOMIC DNA]</scope>
    <source>
        <strain>cv. Columbia</strain>
    </source>
</reference>
<reference key="4">
    <citation type="journal article" date="2017" name="Plant J.">
        <title>Araport11: a complete reannotation of the Arabidopsis thaliana reference genome.</title>
        <authorList>
            <person name="Cheng C.Y."/>
            <person name="Krishnakumar V."/>
            <person name="Chan A.P."/>
            <person name="Thibaud-Nissen F."/>
            <person name="Schobel S."/>
            <person name="Town C.D."/>
        </authorList>
    </citation>
    <scope>GENOME REANNOTATION</scope>
    <source>
        <strain>cv. Columbia</strain>
    </source>
</reference>
<reference key="5">
    <citation type="journal article" date="2003" name="Science">
        <title>Empirical analysis of transcriptional activity in the Arabidopsis genome.</title>
        <authorList>
            <person name="Yamada K."/>
            <person name="Lim J."/>
            <person name="Dale J.M."/>
            <person name="Chen H."/>
            <person name="Shinn P."/>
            <person name="Palm C.J."/>
            <person name="Southwick A.M."/>
            <person name="Wu H.C."/>
            <person name="Kim C.J."/>
            <person name="Nguyen M."/>
            <person name="Pham P.K."/>
            <person name="Cheuk R.F."/>
            <person name="Karlin-Newmann G."/>
            <person name="Liu S.X."/>
            <person name="Lam B."/>
            <person name="Sakano H."/>
            <person name="Wu T."/>
            <person name="Yu G."/>
            <person name="Miranda M."/>
            <person name="Quach H.L."/>
            <person name="Tripp M."/>
            <person name="Chang C.H."/>
            <person name="Lee J.M."/>
            <person name="Toriumi M.J."/>
            <person name="Chan M.M."/>
            <person name="Tang C.C."/>
            <person name="Onodera C.S."/>
            <person name="Deng J.M."/>
            <person name="Akiyama K."/>
            <person name="Ansari Y."/>
            <person name="Arakawa T."/>
            <person name="Banh J."/>
            <person name="Banno F."/>
            <person name="Bowser L."/>
            <person name="Brooks S.Y."/>
            <person name="Carninci P."/>
            <person name="Chao Q."/>
            <person name="Choy N."/>
            <person name="Enju A."/>
            <person name="Goldsmith A.D."/>
            <person name="Gurjal M."/>
            <person name="Hansen N.F."/>
            <person name="Hayashizaki Y."/>
            <person name="Johnson-Hopson C."/>
            <person name="Hsuan V.W."/>
            <person name="Iida K."/>
            <person name="Karnes M."/>
            <person name="Khan S."/>
            <person name="Koesema E."/>
            <person name="Ishida J."/>
            <person name="Jiang P.X."/>
            <person name="Jones T."/>
            <person name="Kawai J."/>
            <person name="Kamiya A."/>
            <person name="Meyers C."/>
            <person name="Nakajima M."/>
            <person name="Narusaka M."/>
            <person name="Seki M."/>
            <person name="Sakurai T."/>
            <person name="Satou M."/>
            <person name="Tamse R."/>
            <person name="Vaysberg M."/>
            <person name="Wallender E.K."/>
            <person name="Wong C."/>
            <person name="Yamamura Y."/>
            <person name="Yuan S."/>
            <person name="Shinozaki K."/>
            <person name="Davis R.W."/>
            <person name="Theologis A."/>
            <person name="Ecker J.R."/>
        </authorList>
    </citation>
    <scope>NUCLEOTIDE SEQUENCE [LARGE SCALE MRNA]</scope>
    <source>
        <strain>cv. Columbia</strain>
    </source>
</reference>
<protein>
    <recommendedName>
        <fullName>Vegetative storage protein 2</fullName>
    </recommendedName>
</protein>